<protein>
    <recommendedName>
        <fullName evidence="1">UPF0246 protein Bcen2424_2223</fullName>
    </recommendedName>
</protein>
<accession>A0K8Z7</accession>
<comment type="similarity">
    <text evidence="1">Belongs to the UPF0246 family.</text>
</comment>
<gene>
    <name type="ordered locus">Bcen2424_2223</name>
</gene>
<evidence type="ECO:0000255" key="1">
    <source>
        <dbReference type="HAMAP-Rule" id="MF_00652"/>
    </source>
</evidence>
<organism>
    <name type="scientific">Burkholderia cenocepacia (strain HI2424)</name>
    <dbReference type="NCBI Taxonomy" id="331272"/>
    <lineage>
        <taxon>Bacteria</taxon>
        <taxon>Pseudomonadati</taxon>
        <taxon>Pseudomonadota</taxon>
        <taxon>Betaproteobacteria</taxon>
        <taxon>Burkholderiales</taxon>
        <taxon>Burkholderiaceae</taxon>
        <taxon>Burkholderia</taxon>
        <taxon>Burkholderia cepacia complex</taxon>
    </lineage>
</organism>
<dbReference type="EMBL" id="CP000458">
    <property type="protein sequence ID" value="ABK08974.1"/>
    <property type="molecule type" value="Genomic_DNA"/>
</dbReference>
<dbReference type="RefSeq" id="WP_011545804.1">
    <property type="nucleotide sequence ID" value="NC_008542.1"/>
</dbReference>
<dbReference type="SMR" id="A0K8Z7"/>
<dbReference type="KEGG" id="bch:Bcen2424_2223"/>
<dbReference type="HOGENOM" id="CLU_061989_0_0_4"/>
<dbReference type="GO" id="GO:0005829">
    <property type="term" value="C:cytosol"/>
    <property type="evidence" value="ECO:0007669"/>
    <property type="project" value="TreeGrafter"/>
</dbReference>
<dbReference type="GO" id="GO:0033194">
    <property type="term" value="P:response to hydroperoxide"/>
    <property type="evidence" value="ECO:0007669"/>
    <property type="project" value="TreeGrafter"/>
</dbReference>
<dbReference type="HAMAP" id="MF_00652">
    <property type="entry name" value="UPF0246"/>
    <property type="match status" value="1"/>
</dbReference>
<dbReference type="InterPro" id="IPR005583">
    <property type="entry name" value="YaaA"/>
</dbReference>
<dbReference type="NCBIfam" id="NF002541">
    <property type="entry name" value="PRK02101.1-1"/>
    <property type="match status" value="1"/>
</dbReference>
<dbReference type="NCBIfam" id="NF002542">
    <property type="entry name" value="PRK02101.1-3"/>
    <property type="match status" value="1"/>
</dbReference>
<dbReference type="PANTHER" id="PTHR30283:SF4">
    <property type="entry name" value="PEROXIDE STRESS RESISTANCE PROTEIN YAAA"/>
    <property type="match status" value="1"/>
</dbReference>
<dbReference type="PANTHER" id="PTHR30283">
    <property type="entry name" value="PEROXIDE STRESS RESPONSE PROTEIN YAAA"/>
    <property type="match status" value="1"/>
</dbReference>
<dbReference type="Pfam" id="PF03883">
    <property type="entry name" value="H2O2_YaaD"/>
    <property type="match status" value="1"/>
</dbReference>
<feature type="chain" id="PRO_1000061587" description="UPF0246 protein Bcen2424_2223">
    <location>
        <begin position="1"/>
        <end position="260"/>
    </location>
</feature>
<name>Y2223_BURCH</name>
<sequence length="260" mass="29163">MIIVLSPAKSLDYETPAHVESYTKPAFVDDASELIDGLRKLSPQDIATLMDISDPLARLNFQRYADWSPTFTPANAKQAVLAFNGDVYEGFDAKSLSSTDLDYAQQHVRVLSGLYGLLRPLDLLQPYRLEMGTRFANARGKDLYAFWGDRITRALNEQLETRSGAARVLVNCASTEYFKSVKPKLLAAPVITPVFEDWKGGRYKIISFHAKRARGLMARFVVENRITDPNALKEFATEGYAFDAAASNDSTYVYRRRVGE</sequence>
<reference key="1">
    <citation type="submission" date="2006-08" db="EMBL/GenBank/DDBJ databases">
        <title>Complete sequence of chromosome 1 of Burkholderia cenocepacia HI2424.</title>
        <authorList>
            <person name="Copeland A."/>
            <person name="Lucas S."/>
            <person name="Lapidus A."/>
            <person name="Barry K."/>
            <person name="Detter J.C."/>
            <person name="Glavina del Rio T."/>
            <person name="Hammon N."/>
            <person name="Israni S."/>
            <person name="Pitluck S."/>
            <person name="Chain P."/>
            <person name="Malfatti S."/>
            <person name="Shin M."/>
            <person name="Vergez L."/>
            <person name="Schmutz J."/>
            <person name="Larimer F."/>
            <person name="Land M."/>
            <person name="Hauser L."/>
            <person name="Kyrpides N."/>
            <person name="Kim E."/>
            <person name="LiPuma J.J."/>
            <person name="Gonzalez C.F."/>
            <person name="Konstantinidis K."/>
            <person name="Tiedje J.M."/>
            <person name="Richardson P."/>
        </authorList>
    </citation>
    <scope>NUCLEOTIDE SEQUENCE [LARGE SCALE GENOMIC DNA]</scope>
    <source>
        <strain>HI2424</strain>
    </source>
</reference>
<proteinExistence type="inferred from homology"/>